<comment type="function">
    <text evidence="2 3">Involved in the degradation of the quaternary amines L-proline betaine and L-carnitine (PubMed:31341018, PubMed:32571881). Component of a corrinoid-dependent methyltransferase system that transfers a methyl group from L-proline betaine or L-carnitine to tetrahydrofolate (THF), forming methyl-THF, a key intermediate in the Wood-Ljungdahl acetogenesis pathway (PubMed:31341018, PubMed:32571881). MtqA catalyzes the transfer of a methyl group from the methylated corrinoid protein MtqC to THF, forming methyl-THF (PubMed:31341018, PubMed:32571881).</text>
</comment>
<comment type="catalytic activity">
    <reaction evidence="2 3">
        <text>methyl-Co(III)-[quaternary-amine-specific corrinoid protein] + (6S)-5,6,7,8-tetrahydrofolate = Co(I)-[quaternary-amine-specific corrinoid protein] + (6S)-5-methyl-5,6,7,8-tetrahydrofolate + H(+)</text>
        <dbReference type="Rhea" id="RHEA:75875"/>
        <dbReference type="Rhea" id="RHEA-COMP:17694"/>
        <dbReference type="Rhea" id="RHEA-COMP:17695"/>
        <dbReference type="ChEBI" id="CHEBI:15378"/>
        <dbReference type="ChEBI" id="CHEBI:18608"/>
        <dbReference type="ChEBI" id="CHEBI:57453"/>
        <dbReference type="ChEBI" id="CHEBI:85033"/>
        <dbReference type="ChEBI" id="CHEBI:85035"/>
    </reaction>
    <physiologicalReaction direction="left-to-right" evidence="2 3">
        <dbReference type="Rhea" id="RHEA:75876"/>
    </physiologicalReaction>
</comment>
<comment type="subunit">
    <text evidence="2 3">The proline betaine:THF methyl transfer system is composed of two methyltransferases, MtpB and MtqA, and the corrinoid protein MtqC (PubMed:31341018). The L-carnitine:THF methyl transfer system is composed of two methyltransferases, MtcB and MtqA, and the corrinoid protein MtqC (PubMed:32571881).</text>
</comment>
<comment type="induction">
    <text evidence="2 3">Up-regulated during growth on proline betaine or L-carnitine.</text>
</comment>
<comment type="similarity">
    <text evidence="6">Belongs to the vitamin-B12 dependent methionine synthase family.</text>
</comment>
<feature type="chain" id="PRO_0000457583" description="Methylcorrinoid:tetrahydrofolate methyltransferase">
    <location>
        <begin position="1"/>
        <end position="271"/>
    </location>
</feature>
<feature type="domain" description="Pterin-binding" evidence="1">
    <location>
        <begin position="1"/>
        <end position="247"/>
    </location>
</feature>
<keyword id="KW-0489">Methyltransferase</keyword>
<keyword id="KW-0808">Transferase</keyword>
<sequence>MIIIGEKLNGAIPVVKKAIEEKDEAFIRDRAIAQAEAGATYIDVCAGTAPEIELESLKWMMDIVQEAVETPLCIDSPDPEILKAVFPLCKKPGLVNSVSGEGNKMDVLLPLFDDADPTWELVAMTCDNAGIPNTVEKKVELTKMMVEEAKKHNLTPNRIHIDPCVMALSTENHSFLNFKAEIEGIREIYPDIHITSGLSNISFGLPARKLMNQNFMTLSMFVGMDSAVMDPTSRDMMGAIFATDALLGNDRLCRKYSKAFRQGKIGPVQAK</sequence>
<reference key="1">
    <citation type="journal article" date="2017" name="Sci. Rep.">
        <title>Determination of the Genome and Primary Transcriptome of Syngas Fermenting Eubacterium limosum ATCC 8486.</title>
        <authorList>
            <person name="Song Y."/>
            <person name="Shin J."/>
            <person name="Jeong Y."/>
            <person name="Jin S."/>
            <person name="Lee J.K."/>
            <person name="Kim D.R."/>
            <person name="Kim S.C."/>
            <person name="Cho S."/>
            <person name="Cho B.K."/>
        </authorList>
    </citation>
    <scope>NUCLEOTIDE SEQUENCE [LARGE SCALE GENOMIC DNA]</scope>
    <source>
        <strain>ATCC 8486</strain>
    </source>
</reference>
<reference key="2">
    <citation type="journal article" date="2019" name="J. Biol. Chem.">
        <title>MtpB, a member of the MttB superfamily from the human intestinal acetogen Eubacterium limosum, catalyzes proline betaine demethylation.</title>
        <authorList>
            <person name="Picking J.W."/>
            <person name="Behrman E.J."/>
            <person name="Zhang L."/>
            <person name="Krzycki J.A."/>
        </authorList>
    </citation>
    <scope>FUNCTION</scope>
    <scope>CATALYTIC ACTIVITY</scope>
    <scope>SUBUNIT</scope>
    <scope>INDUCTION</scope>
    <source>
        <strain>ATCC 8486</strain>
    </source>
</reference>
<reference key="3">
    <citation type="journal article" date="2020" name="J. Biol. Chem.">
        <title>MtcB, a member of the MttB superfamily from the human gut acetogen Eubacterium limosum, is a cobalamin-dependent carnitine demethylase.</title>
        <authorList>
            <person name="Kountz D.J."/>
            <person name="Behrman E.J."/>
            <person name="Zhang L."/>
            <person name="Krzycki J.A."/>
        </authorList>
    </citation>
    <scope>FUNCTION</scope>
    <scope>CATALYTIC ACTIVITY</scope>
    <scope>SUBUNIT</scope>
    <scope>INDUCTION</scope>
    <source>
        <strain>ATCC 8486</strain>
    </source>
</reference>
<accession>P0DX08</accession>
<protein>
    <recommendedName>
        <fullName evidence="5">Methylcorrinoid:tetrahydrofolate methyltransferase</fullName>
        <ecNumber evidence="2 3">2.1.1.-</ecNumber>
    </recommendedName>
    <alternativeName>
        <fullName evidence="5">Methylcorrinoid protein:THF methyltransferase</fullName>
    </alternativeName>
    <alternativeName>
        <fullName evidence="6">[methyl-Co(III) quarternary-amine-specific corrinoid protein]--tetrahydrofolate methyltransferase</fullName>
    </alternativeName>
</protein>
<organism>
    <name type="scientific">Eubacterium limosum</name>
    <dbReference type="NCBI Taxonomy" id="1736"/>
    <lineage>
        <taxon>Bacteria</taxon>
        <taxon>Bacillati</taxon>
        <taxon>Bacillota</taxon>
        <taxon>Clostridia</taxon>
        <taxon>Eubacteriales</taxon>
        <taxon>Eubacteriaceae</taxon>
        <taxon>Eubacterium</taxon>
    </lineage>
</organism>
<dbReference type="EC" id="2.1.1.-" evidence="2 3"/>
<dbReference type="EMBL" id="CP019962">
    <property type="protein sequence ID" value="ARD64907.1"/>
    <property type="molecule type" value="Genomic_DNA"/>
</dbReference>
<dbReference type="RefSeq" id="WP_038351870.1">
    <property type="nucleotide sequence ID" value="NZ_CP019962.1"/>
</dbReference>
<dbReference type="SMR" id="P0DX08"/>
<dbReference type="KEGG" id="elim:B2M23_04840"/>
<dbReference type="OrthoDB" id="358252at2"/>
<dbReference type="Proteomes" id="UP000192391">
    <property type="component" value="Chromosome"/>
</dbReference>
<dbReference type="GO" id="GO:0005829">
    <property type="term" value="C:cytosol"/>
    <property type="evidence" value="ECO:0007669"/>
    <property type="project" value="TreeGrafter"/>
</dbReference>
<dbReference type="GO" id="GO:0008705">
    <property type="term" value="F:methionine synthase activity"/>
    <property type="evidence" value="ECO:0007669"/>
    <property type="project" value="TreeGrafter"/>
</dbReference>
<dbReference type="GO" id="GO:0032259">
    <property type="term" value="P:methylation"/>
    <property type="evidence" value="ECO:0007669"/>
    <property type="project" value="UniProtKB-KW"/>
</dbReference>
<dbReference type="GO" id="GO:0042558">
    <property type="term" value="P:pteridine-containing compound metabolic process"/>
    <property type="evidence" value="ECO:0007669"/>
    <property type="project" value="InterPro"/>
</dbReference>
<dbReference type="Gene3D" id="3.20.20.20">
    <property type="entry name" value="Dihydropteroate synthase-like"/>
    <property type="match status" value="1"/>
</dbReference>
<dbReference type="InterPro" id="IPR011005">
    <property type="entry name" value="Dihydropteroate_synth-like_sf"/>
</dbReference>
<dbReference type="InterPro" id="IPR050554">
    <property type="entry name" value="Met_Synthase/Corrinoid"/>
</dbReference>
<dbReference type="InterPro" id="IPR000489">
    <property type="entry name" value="Pterin-binding_dom"/>
</dbReference>
<dbReference type="NCBIfam" id="NF005719">
    <property type="entry name" value="PRK07535.1"/>
    <property type="match status" value="1"/>
</dbReference>
<dbReference type="PANTHER" id="PTHR45833">
    <property type="entry name" value="METHIONINE SYNTHASE"/>
    <property type="match status" value="1"/>
</dbReference>
<dbReference type="Pfam" id="PF00809">
    <property type="entry name" value="Pterin_bind"/>
    <property type="match status" value="1"/>
</dbReference>
<dbReference type="SUPFAM" id="SSF51717">
    <property type="entry name" value="Dihydropteroate synthetase-like"/>
    <property type="match status" value="1"/>
</dbReference>
<dbReference type="PROSITE" id="PS50972">
    <property type="entry name" value="PTERIN_BINDING"/>
    <property type="match status" value="1"/>
</dbReference>
<evidence type="ECO:0000255" key="1">
    <source>
        <dbReference type="PROSITE-ProRule" id="PRU00334"/>
    </source>
</evidence>
<evidence type="ECO:0000269" key="2">
    <source>
    </source>
</evidence>
<evidence type="ECO:0000269" key="3">
    <source>
    </source>
</evidence>
<evidence type="ECO:0000303" key="4">
    <source>
    </source>
</evidence>
<evidence type="ECO:0000303" key="5">
    <source>
    </source>
</evidence>
<evidence type="ECO:0000305" key="6"/>
<evidence type="ECO:0000312" key="7">
    <source>
        <dbReference type="EMBL" id="ARD64907.1"/>
    </source>
</evidence>
<name>MTQA_EUBLI</name>
<gene>
    <name evidence="4 5" type="primary">mtqA</name>
    <name evidence="7" type="ORF">B2M23_04840</name>
</gene>
<proteinExistence type="evidence at protein level"/>